<evidence type="ECO:0000255" key="1">
    <source>
        <dbReference type="HAMAP-Rule" id="MF_01326"/>
    </source>
</evidence>
<evidence type="ECO:0000256" key="2">
    <source>
        <dbReference type="SAM" id="MobiDB-lite"/>
    </source>
</evidence>
<evidence type="ECO:0000305" key="3"/>
<protein>
    <recommendedName>
        <fullName evidence="1">Large ribosomal subunit protein uL24</fullName>
    </recommendedName>
    <alternativeName>
        <fullName evidence="3">50S ribosomal protein L24</fullName>
    </alternativeName>
</protein>
<comment type="function">
    <text evidence="1">One of two assembly initiator proteins, it binds directly to the 5'-end of the 23S rRNA, where it nucleates assembly of the 50S subunit.</text>
</comment>
<comment type="function">
    <text evidence="1">One of the proteins that surrounds the polypeptide exit tunnel on the outside of the subunit.</text>
</comment>
<comment type="subunit">
    <text evidence="1">Part of the 50S ribosomal subunit.</text>
</comment>
<comment type="similarity">
    <text evidence="1">Belongs to the universal ribosomal protein uL24 family.</text>
</comment>
<organism>
    <name type="scientific">Mycolicibacterium gilvum (strain PYR-GCK)</name>
    <name type="common">Mycobacterium gilvum (strain PYR-GCK)</name>
    <dbReference type="NCBI Taxonomy" id="350054"/>
    <lineage>
        <taxon>Bacteria</taxon>
        <taxon>Bacillati</taxon>
        <taxon>Actinomycetota</taxon>
        <taxon>Actinomycetes</taxon>
        <taxon>Mycobacteriales</taxon>
        <taxon>Mycobacteriaceae</taxon>
        <taxon>Mycolicibacterium</taxon>
    </lineage>
</organism>
<feature type="chain" id="PRO_1000086485" description="Large ribosomal subunit protein uL24">
    <location>
        <begin position="1"/>
        <end position="105"/>
    </location>
</feature>
<feature type="region of interest" description="Disordered" evidence="2">
    <location>
        <begin position="77"/>
        <end position="105"/>
    </location>
</feature>
<feature type="compositionally biased region" description="Basic and acidic residues" evidence="2">
    <location>
        <begin position="77"/>
        <end position="93"/>
    </location>
</feature>
<dbReference type="EMBL" id="CP000656">
    <property type="protein sequence ID" value="ABP47502.1"/>
    <property type="molecule type" value="Genomic_DNA"/>
</dbReference>
<dbReference type="SMR" id="A4TEC6"/>
<dbReference type="STRING" id="350054.Mflv_5036"/>
<dbReference type="KEGG" id="mgi:Mflv_5036"/>
<dbReference type="eggNOG" id="COG0198">
    <property type="taxonomic scope" value="Bacteria"/>
</dbReference>
<dbReference type="HOGENOM" id="CLU_093315_2_0_11"/>
<dbReference type="OrthoDB" id="9807419at2"/>
<dbReference type="GO" id="GO:1990904">
    <property type="term" value="C:ribonucleoprotein complex"/>
    <property type="evidence" value="ECO:0007669"/>
    <property type="project" value="UniProtKB-KW"/>
</dbReference>
<dbReference type="GO" id="GO:0005840">
    <property type="term" value="C:ribosome"/>
    <property type="evidence" value="ECO:0007669"/>
    <property type="project" value="UniProtKB-KW"/>
</dbReference>
<dbReference type="GO" id="GO:0019843">
    <property type="term" value="F:rRNA binding"/>
    <property type="evidence" value="ECO:0007669"/>
    <property type="project" value="UniProtKB-UniRule"/>
</dbReference>
<dbReference type="GO" id="GO:0003735">
    <property type="term" value="F:structural constituent of ribosome"/>
    <property type="evidence" value="ECO:0007669"/>
    <property type="project" value="InterPro"/>
</dbReference>
<dbReference type="GO" id="GO:0006412">
    <property type="term" value="P:translation"/>
    <property type="evidence" value="ECO:0007669"/>
    <property type="project" value="UniProtKB-UniRule"/>
</dbReference>
<dbReference type="CDD" id="cd06089">
    <property type="entry name" value="KOW_RPL26"/>
    <property type="match status" value="1"/>
</dbReference>
<dbReference type="FunFam" id="2.30.30.30:FF:000004">
    <property type="entry name" value="50S ribosomal protein L24"/>
    <property type="match status" value="1"/>
</dbReference>
<dbReference type="Gene3D" id="2.30.30.30">
    <property type="match status" value="1"/>
</dbReference>
<dbReference type="HAMAP" id="MF_01326_B">
    <property type="entry name" value="Ribosomal_uL24_B"/>
    <property type="match status" value="1"/>
</dbReference>
<dbReference type="InterPro" id="IPR005824">
    <property type="entry name" value="KOW"/>
</dbReference>
<dbReference type="InterPro" id="IPR014722">
    <property type="entry name" value="Rib_uL2_dom2"/>
</dbReference>
<dbReference type="InterPro" id="IPR003256">
    <property type="entry name" value="Ribosomal_uL24"/>
</dbReference>
<dbReference type="InterPro" id="IPR005825">
    <property type="entry name" value="Ribosomal_uL24_CS"/>
</dbReference>
<dbReference type="InterPro" id="IPR041988">
    <property type="entry name" value="Ribosomal_uL24_KOW"/>
</dbReference>
<dbReference type="InterPro" id="IPR008991">
    <property type="entry name" value="Translation_prot_SH3-like_sf"/>
</dbReference>
<dbReference type="NCBIfam" id="TIGR01079">
    <property type="entry name" value="rplX_bact"/>
    <property type="match status" value="1"/>
</dbReference>
<dbReference type="PANTHER" id="PTHR12903">
    <property type="entry name" value="MITOCHONDRIAL RIBOSOMAL PROTEIN L24"/>
    <property type="match status" value="1"/>
</dbReference>
<dbReference type="Pfam" id="PF00467">
    <property type="entry name" value="KOW"/>
    <property type="match status" value="1"/>
</dbReference>
<dbReference type="Pfam" id="PF17136">
    <property type="entry name" value="ribosomal_L24"/>
    <property type="match status" value="1"/>
</dbReference>
<dbReference type="SMART" id="SM00739">
    <property type="entry name" value="KOW"/>
    <property type="match status" value="1"/>
</dbReference>
<dbReference type="SUPFAM" id="SSF50104">
    <property type="entry name" value="Translation proteins SH3-like domain"/>
    <property type="match status" value="1"/>
</dbReference>
<dbReference type="PROSITE" id="PS01108">
    <property type="entry name" value="RIBOSOMAL_L24"/>
    <property type="match status" value="1"/>
</dbReference>
<sequence length="105" mass="11276">MKVRKGDTVLVISGKDKGAKGKVLVAYPDRNKVLVEGVNRIKKHTAESRTERGAASGGIVTQEAPISVSNVMLLDSDGKPTRVGYRKDDETGKNVRIAKSNGKDL</sequence>
<accession>A4TEC6</accession>
<gene>
    <name evidence="1" type="primary">rplX</name>
    <name type="ordered locus">Mflv_5036</name>
</gene>
<name>RL24_MYCGI</name>
<proteinExistence type="inferred from homology"/>
<keyword id="KW-0687">Ribonucleoprotein</keyword>
<keyword id="KW-0689">Ribosomal protein</keyword>
<keyword id="KW-0694">RNA-binding</keyword>
<keyword id="KW-0699">rRNA-binding</keyword>
<reference key="1">
    <citation type="submission" date="2007-04" db="EMBL/GenBank/DDBJ databases">
        <title>Complete sequence of chromosome of Mycobacterium gilvum PYR-GCK.</title>
        <authorList>
            <consortium name="US DOE Joint Genome Institute"/>
            <person name="Copeland A."/>
            <person name="Lucas S."/>
            <person name="Lapidus A."/>
            <person name="Barry K."/>
            <person name="Detter J.C."/>
            <person name="Glavina del Rio T."/>
            <person name="Hammon N."/>
            <person name="Israni S."/>
            <person name="Dalin E."/>
            <person name="Tice H."/>
            <person name="Pitluck S."/>
            <person name="Chain P."/>
            <person name="Malfatti S."/>
            <person name="Shin M."/>
            <person name="Vergez L."/>
            <person name="Schmutz J."/>
            <person name="Larimer F."/>
            <person name="Land M."/>
            <person name="Hauser L."/>
            <person name="Kyrpides N."/>
            <person name="Mikhailova N."/>
            <person name="Miller C."/>
            <person name="Richardson P."/>
        </authorList>
    </citation>
    <scope>NUCLEOTIDE SEQUENCE [LARGE SCALE GENOMIC DNA]</scope>
    <source>
        <strain>PYR-GCK</strain>
    </source>
</reference>